<dbReference type="EC" id="2.7.1.23" evidence="1"/>
<dbReference type="EMBL" id="BX548175">
    <property type="protein sequence ID" value="CAE20543.1"/>
    <property type="molecule type" value="Genomic_DNA"/>
</dbReference>
<dbReference type="RefSeq" id="WP_011129747.1">
    <property type="nucleotide sequence ID" value="NC_005071.1"/>
</dbReference>
<dbReference type="SMR" id="Q7V8H9"/>
<dbReference type="KEGG" id="pmt:PMT_0368"/>
<dbReference type="eggNOG" id="COG0061">
    <property type="taxonomic scope" value="Bacteria"/>
</dbReference>
<dbReference type="HOGENOM" id="CLU_008831_0_1_3"/>
<dbReference type="OrthoDB" id="9774737at2"/>
<dbReference type="Proteomes" id="UP000001423">
    <property type="component" value="Chromosome"/>
</dbReference>
<dbReference type="GO" id="GO:0005737">
    <property type="term" value="C:cytoplasm"/>
    <property type="evidence" value="ECO:0007669"/>
    <property type="project" value="UniProtKB-SubCell"/>
</dbReference>
<dbReference type="GO" id="GO:0005524">
    <property type="term" value="F:ATP binding"/>
    <property type="evidence" value="ECO:0007669"/>
    <property type="project" value="UniProtKB-KW"/>
</dbReference>
<dbReference type="GO" id="GO:0046872">
    <property type="term" value="F:metal ion binding"/>
    <property type="evidence" value="ECO:0007669"/>
    <property type="project" value="UniProtKB-UniRule"/>
</dbReference>
<dbReference type="GO" id="GO:0051287">
    <property type="term" value="F:NAD binding"/>
    <property type="evidence" value="ECO:0007669"/>
    <property type="project" value="UniProtKB-ARBA"/>
</dbReference>
<dbReference type="GO" id="GO:0003951">
    <property type="term" value="F:NAD+ kinase activity"/>
    <property type="evidence" value="ECO:0007669"/>
    <property type="project" value="UniProtKB-UniRule"/>
</dbReference>
<dbReference type="GO" id="GO:0019674">
    <property type="term" value="P:NAD metabolic process"/>
    <property type="evidence" value="ECO:0007669"/>
    <property type="project" value="InterPro"/>
</dbReference>
<dbReference type="GO" id="GO:0006741">
    <property type="term" value="P:NADP biosynthetic process"/>
    <property type="evidence" value="ECO:0007669"/>
    <property type="project" value="UniProtKB-UniRule"/>
</dbReference>
<dbReference type="Gene3D" id="3.40.50.10330">
    <property type="entry name" value="Probable inorganic polyphosphate/atp-NAD kinase, domain 1"/>
    <property type="match status" value="1"/>
</dbReference>
<dbReference type="Gene3D" id="2.60.200.30">
    <property type="entry name" value="Probable inorganic polyphosphate/atp-NAD kinase, domain 2"/>
    <property type="match status" value="1"/>
</dbReference>
<dbReference type="HAMAP" id="MF_00361">
    <property type="entry name" value="NAD_kinase"/>
    <property type="match status" value="1"/>
</dbReference>
<dbReference type="InterPro" id="IPR017438">
    <property type="entry name" value="ATP-NAD_kinase_N"/>
</dbReference>
<dbReference type="InterPro" id="IPR017437">
    <property type="entry name" value="ATP-NAD_kinase_PpnK-typ_C"/>
</dbReference>
<dbReference type="InterPro" id="IPR016064">
    <property type="entry name" value="NAD/diacylglycerol_kinase_sf"/>
</dbReference>
<dbReference type="InterPro" id="IPR002504">
    <property type="entry name" value="NADK"/>
</dbReference>
<dbReference type="NCBIfam" id="NF002732">
    <property type="entry name" value="PRK02649.1"/>
    <property type="match status" value="1"/>
</dbReference>
<dbReference type="PANTHER" id="PTHR20275">
    <property type="entry name" value="NAD KINASE"/>
    <property type="match status" value="1"/>
</dbReference>
<dbReference type="PANTHER" id="PTHR20275:SF13">
    <property type="entry name" value="NAD KINASE 2"/>
    <property type="match status" value="1"/>
</dbReference>
<dbReference type="Pfam" id="PF01513">
    <property type="entry name" value="NAD_kinase"/>
    <property type="match status" value="1"/>
</dbReference>
<dbReference type="Pfam" id="PF20143">
    <property type="entry name" value="NAD_kinase_C"/>
    <property type="match status" value="1"/>
</dbReference>
<dbReference type="SUPFAM" id="SSF111331">
    <property type="entry name" value="NAD kinase/diacylglycerol kinase-like"/>
    <property type="match status" value="1"/>
</dbReference>
<name>NADK2_PROMM</name>
<reference key="1">
    <citation type="journal article" date="2003" name="Nature">
        <title>Genome divergence in two Prochlorococcus ecotypes reflects oceanic niche differentiation.</title>
        <authorList>
            <person name="Rocap G."/>
            <person name="Larimer F.W."/>
            <person name="Lamerdin J.E."/>
            <person name="Malfatti S."/>
            <person name="Chain P."/>
            <person name="Ahlgren N.A."/>
            <person name="Arellano A."/>
            <person name="Coleman M."/>
            <person name="Hauser L."/>
            <person name="Hess W.R."/>
            <person name="Johnson Z.I."/>
            <person name="Land M.L."/>
            <person name="Lindell D."/>
            <person name="Post A.F."/>
            <person name="Regala W."/>
            <person name="Shah M."/>
            <person name="Shaw S.L."/>
            <person name="Steglich C."/>
            <person name="Sullivan M.B."/>
            <person name="Ting C.S."/>
            <person name="Tolonen A."/>
            <person name="Webb E.A."/>
            <person name="Zinser E.R."/>
            <person name="Chisholm S.W."/>
        </authorList>
    </citation>
    <scope>NUCLEOTIDE SEQUENCE [LARGE SCALE GENOMIC DNA]</scope>
    <source>
        <strain>MIT 9313</strain>
    </source>
</reference>
<evidence type="ECO:0000255" key="1">
    <source>
        <dbReference type="HAMAP-Rule" id="MF_00361"/>
    </source>
</evidence>
<organism>
    <name type="scientific">Prochlorococcus marinus (strain MIT 9313)</name>
    <dbReference type="NCBI Taxonomy" id="74547"/>
    <lineage>
        <taxon>Bacteria</taxon>
        <taxon>Bacillati</taxon>
        <taxon>Cyanobacteriota</taxon>
        <taxon>Cyanophyceae</taxon>
        <taxon>Synechococcales</taxon>
        <taxon>Prochlorococcaceae</taxon>
        <taxon>Prochlorococcus</taxon>
    </lineage>
</organism>
<keyword id="KW-0067">ATP-binding</keyword>
<keyword id="KW-0963">Cytoplasm</keyword>
<keyword id="KW-0418">Kinase</keyword>
<keyword id="KW-0520">NAD</keyword>
<keyword id="KW-0521">NADP</keyword>
<keyword id="KW-0547">Nucleotide-binding</keyword>
<keyword id="KW-1185">Reference proteome</keyword>
<keyword id="KW-0808">Transferase</keyword>
<gene>
    <name evidence="1" type="primary">nadK2</name>
    <name type="ordered locus">PMT_0368</name>
</gene>
<protein>
    <recommendedName>
        <fullName evidence="1">NAD kinase 2</fullName>
        <ecNumber evidence="1">2.7.1.23</ecNumber>
    </recommendedName>
    <alternativeName>
        <fullName evidence="1">ATP-dependent NAD kinase 2</fullName>
    </alternativeName>
</protein>
<feature type="chain" id="PRO_0000229670" description="NAD kinase 2">
    <location>
        <begin position="1"/>
        <end position="302"/>
    </location>
</feature>
<feature type="active site" description="Proton acceptor" evidence="1">
    <location>
        <position position="78"/>
    </location>
</feature>
<feature type="binding site" evidence="1">
    <location>
        <begin position="78"/>
        <end position="79"/>
    </location>
    <ligand>
        <name>NAD(+)</name>
        <dbReference type="ChEBI" id="CHEBI:57540"/>
    </ligand>
</feature>
<feature type="binding site" evidence="1">
    <location>
        <begin position="152"/>
        <end position="153"/>
    </location>
    <ligand>
        <name>NAD(+)</name>
        <dbReference type="ChEBI" id="CHEBI:57540"/>
    </ligand>
</feature>
<feature type="binding site" evidence="1">
    <location>
        <position position="182"/>
    </location>
    <ligand>
        <name>NAD(+)</name>
        <dbReference type="ChEBI" id="CHEBI:57540"/>
    </ligand>
</feature>
<feature type="binding site" evidence="1">
    <location>
        <begin position="193"/>
        <end position="198"/>
    </location>
    <ligand>
        <name>NAD(+)</name>
        <dbReference type="ChEBI" id="CHEBI:57540"/>
    </ligand>
</feature>
<feature type="binding site" evidence="1">
    <location>
        <position position="217"/>
    </location>
    <ligand>
        <name>NAD(+)</name>
        <dbReference type="ChEBI" id="CHEBI:57540"/>
    </ligand>
</feature>
<proteinExistence type="inferred from homology"/>
<comment type="function">
    <text evidence="1">Involved in the regulation of the intracellular balance of NAD and NADP, and is a key enzyme in the biosynthesis of NADP. Catalyzes specifically the phosphorylation on 2'-hydroxyl of the adenosine moiety of NAD to yield NADP.</text>
</comment>
<comment type="catalytic activity">
    <reaction evidence="1">
        <text>NAD(+) + ATP = ADP + NADP(+) + H(+)</text>
        <dbReference type="Rhea" id="RHEA:18629"/>
        <dbReference type="ChEBI" id="CHEBI:15378"/>
        <dbReference type="ChEBI" id="CHEBI:30616"/>
        <dbReference type="ChEBI" id="CHEBI:57540"/>
        <dbReference type="ChEBI" id="CHEBI:58349"/>
        <dbReference type="ChEBI" id="CHEBI:456216"/>
        <dbReference type="EC" id="2.7.1.23"/>
    </reaction>
</comment>
<comment type="cofactor">
    <cofactor evidence="1">
        <name>a divalent metal cation</name>
        <dbReference type="ChEBI" id="CHEBI:60240"/>
    </cofactor>
</comment>
<comment type="subcellular location">
    <subcellularLocation>
        <location evidence="1">Cytoplasm</location>
    </subcellularLocation>
</comment>
<comment type="similarity">
    <text evidence="1">Belongs to the NAD kinase family.</text>
</comment>
<sequence length="302" mass="32556">MPCVGLIVNDGKELAVETALTLQSRLEQAGIEVVRASSSGGMVGFANPDQHLRLLGYNACVPEGFDASMALAIVLGGDGTVLSAARQTAPVQVPILTINTGHLGFLAEAYLADLDRVIEQVLNKQWTIEERCTLVVSVLRGDQCRWEALSLNEMALHREPLTSMCHFEVAIGRHAPVDISADGVILSTPTGSTAYALSAGGPVITPECPVLQLAPIAPHSLASRALVFSDQEPVTVFPATADRLMMVVDGSAGCYVWPEDRVLIRRSDHPVRFVRLADHEFFQVLRNKLGWGLPHVAKPDRP</sequence>
<accession>Q7V8H9</accession>